<proteinExistence type="inferred from homology"/>
<evidence type="ECO:0000255" key="1">
    <source>
        <dbReference type="HAMAP-Rule" id="MF_00274"/>
    </source>
</evidence>
<comment type="function">
    <text evidence="1">Binds to DNA and alters its conformation. May be involved in regulation of gene expression, nucleoid organization and DNA protection.</text>
</comment>
<comment type="subunit">
    <text evidence="1">Homodimer.</text>
</comment>
<comment type="subcellular location">
    <subcellularLocation>
        <location evidence="1">Cytoplasm</location>
        <location evidence="1">Nucleoid</location>
    </subcellularLocation>
</comment>
<comment type="similarity">
    <text evidence="1">Belongs to the YbaB/EbfC family.</text>
</comment>
<accession>A2BNE6</accession>
<reference key="1">
    <citation type="journal article" date="2007" name="PLoS Genet.">
        <title>Patterns and implications of gene gain and loss in the evolution of Prochlorococcus.</title>
        <authorList>
            <person name="Kettler G.C."/>
            <person name="Martiny A.C."/>
            <person name="Huang K."/>
            <person name="Zucker J."/>
            <person name="Coleman M.L."/>
            <person name="Rodrigue S."/>
            <person name="Chen F."/>
            <person name="Lapidus A."/>
            <person name="Ferriera S."/>
            <person name="Johnson J."/>
            <person name="Steglich C."/>
            <person name="Church G.M."/>
            <person name="Richardson P."/>
            <person name="Chisholm S.W."/>
        </authorList>
    </citation>
    <scope>NUCLEOTIDE SEQUENCE [LARGE SCALE GENOMIC DNA]</scope>
    <source>
        <strain>AS9601</strain>
    </source>
</reference>
<keyword id="KW-0963">Cytoplasm</keyword>
<keyword id="KW-0238">DNA-binding</keyword>
<feature type="chain" id="PRO_1000003797" description="Nucleoid-associated protein A9601_00191">
    <location>
        <begin position="1"/>
        <end position="116"/>
    </location>
</feature>
<organism>
    <name type="scientific">Prochlorococcus marinus (strain AS9601)</name>
    <dbReference type="NCBI Taxonomy" id="146891"/>
    <lineage>
        <taxon>Bacteria</taxon>
        <taxon>Bacillati</taxon>
        <taxon>Cyanobacteriota</taxon>
        <taxon>Cyanophyceae</taxon>
        <taxon>Synechococcales</taxon>
        <taxon>Prochlorococcaceae</taxon>
        <taxon>Prochlorococcus</taxon>
    </lineage>
</organism>
<name>Y019_PROMS</name>
<gene>
    <name type="ordered locus">A9601_00191</name>
</gene>
<dbReference type="EMBL" id="CP000551">
    <property type="protein sequence ID" value="ABM69307.1"/>
    <property type="molecule type" value="Genomic_DNA"/>
</dbReference>
<dbReference type="RefSeq" id="WP_011817497.1">
    <property type="nucleotide sequence ID" value="NC_008816.1"/>
</dbReference>
<dbReference type="SMR" id="A2BNE6"/>
<dbReference type="STRING" id="146891.A9601_00191"/>
<dbReference type="KEGG" id="pmb:A9601_00191"/>
<dbReference type="eggNOG" id="COG0718">
    <property type="taxonomic scope" value="Bacteria"/>
</dbReference>
<dbReference type="HOGENOM" id="CLU_140930_0_1_3"/>
<dbReference type="OrthoDB" id="487780at2"/>
<dbReference type="Proteomes" id="UP000002590">
    <property type="component" value="Chromosome"/>
</dbReference>
<dbReference type="GO" id="GO:0043590">
    <property type="term" value="C:bacterial nucleoid"/>
    <property type="evidence" value="ECO:0007669"/>
    <property type="project" value="UniProtKB-UniRule"/>
</dbReference>
<dbReference type="GO" id="GO:0005829">
    <property type="term" value="C:cytosol"/>
    <property type="evidence" value="ECO:0007669"/>
    <property type="project" value="TreeGrafter"/>
</dbReference>
<dbReference type="GO" id="GO:0003677">
    <property type="term" value="F:DNA binding"/>
    <property type="evidence" value="ECO:0007669"/>
    <property type="project" value="UniProtKB-UniRule"/>
</dbReference>
<dbReference type="Gene3D" id="3.30.1310.10">
    <property type="entry name" value="Nucleoid-associated protein YbaB-like domain"/>
    <property type="match status" value="1"/>
</dbReference>
<dbReference type="HAMAP" id="MF_00274">
    <property type="entry name" value="DNA_YbaB_EbfC"/>
    <property type="match status" value="1"/>
</dbReference>
<dbReference type="InterPro" id="IPR036894">
    <property type="entry name" value="YbaB-like_sf"/>
</dbReference>
<dbReference type="InterPro" id="IPR004401">
    <property type="entry name" value="YbaB/EbfC"/>
</dbReference>
<dbReference type="NCBIfam" id="TIGR00103">
    <property type="entry name" value="DNA_YbaB_EbfC"/>
    <property type="match status" value="1"/>
</dbReference>
<dbReference type="PANTHER" id="PTHR33449">
    <property type="entry name" value="NUCLEOID-ASSOCIATED PROTEIN YBAB"/>
    <property type="match status" value="1"/>
</dbReference>
<dbReference type="PANTHER" id="PTHR33449:SF1">
    <property type="entry name" value="NUCLEOID-ASSOCIATED PROTEIN YBAB"/>
    <property type="match status" value="1"/>
</dbReference>
<dbReference type="Pfam" id="PF02575">
    <property type="entry name" value="YbaB_DNA_bd"/>
    <property type="match status" value="1"/>
</dbReference>
<dbReference type="PIRSF" id="PIRSF004555">
    <property type="entry name" value="UCP004555"/>
    <property type="match status" value="1"/>
</dbReference>
<dbReference type="SUPFAM" id="SSF82607">
    <property type="entry name" value="YbaB-like"/>
    <property type="match status" value="1"/>
</dbReference>
<sequence>MAGFGLPNFGQLTEAFKKAKQIQQDAQKLQDELENMEIEGKSDDEMIKVWISGNQLPLKVEVQENIFNSNKEQIEKNILQAIKKAHELSTTTMKERMNDLTGGLNLNLPGFDNSDS</sequence>
<protein>
    <recommendedName>
        <fullName evidence="1">Nucleoid-associated protein A9601_00191</fullName>
    </recommendedName>
</protein>